<dbReference type="EC" id="2.7.11.24" evidence="1"/>
<dbReference type="EMBL" id="FO080362">
    <property type="protein sequence ID" value="CCD63173.1"/>
    <property type="molecule type" value="Genomic_DNA"/>
</dbReference>
<dbReference type="EMBL" id="BX284603">
    <property type="protein sequence ID" value="CCD63174.1"/>
    <property type="molecule type" value="Genomic_DNA"/>
</dbReference>
<dbReference type="EMBL" id="BX284603">
    <property type="protein sequence ID" value="CCD63175.1"/>
    <property type="molecule type" value="Genomic_DNA"/>
</dbReference>
<dbReference type="PIR" id="H88473">
    <property type="entry name" value="H88473"/>
</dbReference>
<dbReference type="RefSeq" id="NP_741166.1">
    <property type="nucleotide sequence ID" value="NM_171145.4"/>
</dbReference>
<dbReference type="RefSeq" id="NP_741167.1">
    <property type="nucleotide sequence ID" value="NM_171146.3"/>
</dbReference>
<dbReference type="SMR" id="Q11179"/>
<dbReference type="BioGRID" id="41078">
    <property type="interactions" value="4"/>
</dbReference>
<dbReference type="FunCoup" id="Q11179">
    <property type="interactions" value="9"/>
</dbReference>
<dbReference type="STRING" id="6239.C05D10.2a.1"/>
<dbReference type="PaxDb" id="6239-C05D10.2a"/>
<dbReference type="PeptideAtlas" id="Q11179"/>
<dbReference type="GeneID" id="175857"/>
<dbReference type="KEGG" id="cel:CELE_C05D10.2"/>
<dbReference type="AGR" id="WB:WBGene00015478"/>
<dbReference type="CTD" id="175857"/>
<dbReference type="WormBase" id="C05D10.2a">
    <property type="protein sequence ID" value="CE29020"/>
    <property type="gene ID" value="WBGene00015478"/>
    <property type="gene designation" value="mapk-15"/>
</dbReference>
<dbReference type="eggNOG" id="KOG0660">
    <property type="taxonomic scope" value="Eukaryota"/>
</dbReference>
<dbReference type="GeneTree" id="ENSGT00940000159758"/>
<dbReference type="InParanoid" id="Q11179"/>
<dbReference type="OMA" id="PDQEWTR"/>
<dbReference type="OrthoDB" id="192887at2759"/>
<dbReference type="PhylomeDB" id="Q11179"/>
<dbReference type="PRO" id="PR:Q11179"/>
<dbReference type="Proteomes" id="UP000001940">
    <property type="component" value="Chromosome III"/>
</dbReference>
<dbReference type="Bgee" id="WBGene00015478">
    <property type="expression patterns" value="Expressed in pharyngeal muscle cell (C elegans) and 3 other cell types or tissues"/>
</dbReference>
<dbReference type="GO" id="GO:0005930">
    <property type="term" value="C:axoneme"/>
    <property type="evidence" value="ECO:0000314"/>
    <property type="project" value="UniProtKB"/>
</dbReference>
<dbReference type="GO" id="GO:0005911">
    <property type="term" value="C:cell-cell junction"/>
    <property type="evidence" value="ECO:0000314"/>
    <property type="project" value="UniProtKB"/>
</dbReference>
<dbReference type="GO" id="GO:0036064">
    <property type="term" value="C:ciliary basal body"/>
    <property type="evidence" value="ECO:0000314"/>
    <property type="project" value="UniProtKB"/>
</dbReference>
<dbReference type="GO" id="GO:0060170">
    <property type="term" value="C:ciliary membrane"/>
    <property type="evidence" value="ECO:0007669"/>
    <property type="project" value="UniProtKB-SubCell"/>
</dbReference>
<dbReference type="GO" id="GO:0005737">
    <property type="term" value="C:cytoplasm"/>
    <property type="evidence" value="ECO:0000318"/>
    <property type="project" value="GO_Central"/>
</dbReference>
<dbReference type="GO" id="GO:0030425">
    <property type="term" value="C:dendrite"/>
    <property type="evidence" value="ECO:0007669"/>
    <property type="project" value="UniProtKB-SubCell"/>
</dbReference>
<dbReference type="GO" id="GO:0005634">
    <property type="term" value="C:nucleus"/>
    <property type="evidence" value="ECO:0000318"/>
    <property type="project" value="GO_Central"/>
</dbReference>
<dbReference type="GO" id="GO:0043204">
    <property type="term" value="C:perikaryon"/>
    <property type="evidence" value="ECO:0007669"/>
    <property type="project" value="UniProtKB-SubCell"/>
</dbReference>
<dbReference type="GO" id="GO:0005524">
    <property type="term" value="F:ATP binding"/>
    <property type="evidence" value="ECO:0007669"/>
    <property type="project" value="UniProtKB-KW"/>
</dbReference>
<dbReference type="GO" id="GO:0004707">
    <property type="term" value="F:MAP kinase activity"/>
    <property type="evidence" value="ECO:0007669"/>
    <property type="project" value="UniProtKB-EC"/>
</dbReference>
<dbReference type="GO" id="GO:0106310">
    <property type="term" value="F:protein serine kinase activity"/>
    <property type="evidence" value="ECO:0007669"/>
    <property type="project" value="RHEA"/>
</dbReference>
<dbReference type="GO" id="GO:0004674">
    <property type="term" value="F:protein serine/threonine kinase activity"/>
    <property type="evidence" value="ECO:0000318"/>
    <property type="project" value="GO_Central"/>
</dbReference>
<dbReference type="GO" id="GO:0030030">
    <property type="term" value="P:cell projection organization"/>
    <property type="evidence" value="ECO:0007669"/>
    <property type="project" value="UniProtKB-KW"/>
</dbReference>
<dbReference type="GO" id="GO:0090494">
    <property type="term" value="P:dopamine uptake"/>
    <property type="evidence" value="ECO:0000314"/>
    <property type="project" value="UniProtKB"/>
</dbReference>
<dbReference type="GO" id="GO:0035556">
    <property type="term" value="P:intracellular signal transduction"/>
    <property type="evidence" value="ECO:0000318"/>
    <property type="project" value="GO_Central"/>
</dbReference>
<dbReference type="GO" id="GO:1904491">
    <property type="term" value="P:protein localization to ciliary transition zone"/>
    <property type="evidence" value="ECO:0000315"/>
    <property type="project" value="UniProtKB"/>
</dbReference>
<dbReference type="GO" id="GO:1902017">
    <property type="term" value="P:regulation of cilium assembly"/>
    <property type="evidence" value="ECO:0000315"/>
    <property type="project" value="UniProtKB"/>
</dbReference>
<dbReference type="CDD" id="cd07852">
    <property type="entry name" value="STKc_MAPK15-like"/>
    <property type="match status" value="1"/>
</dbReference>
<dbReference type="FunFam" id="1.10.510.10:FF:000238">
    <property type="entry name" value="Mitogen-activated protein kinase"/>
    <property type="match status" value="1"/>
</dbReference>
<dbReference type="FunFam" id="3.30.200.20:FF:000166">
    <property type="entry name" value="Mitogen-activated protein kinase"/>
    <property type="match status" value="1"/>
</dbReference>
<dbReference type="Gene3D" id="3.30.200.20">
    <property type="entry name" value="Phosphorylase Kinase, domain 1"/>
    <property type="match status" value="1"/>
</dbReference>
<dbReference type="Gene3D" id="1.10.510.10">
    <property type="entry name" value="Transferase(Phosphotransferase) domain 1"/>
    <property type="match status" value="1"/>
</dbReference>
<dbReference type="InterPro" id="IPR011009">
    <property type="entry name" value="Kinase-like_dom_sf"/>
</dbReference>
<dbReference type="InterPro" id="IPR050117">
    <property type="entry name" value="MAP_kinase"/>
</dbReference>
<dbReference type="InterPro" id="IPR003527">
    <property type="entry name" value="MAP_kinase_CS"/>
</dbReference>
<dbReference type="InterPro" id="IPR000719">
    <property type="entry name" value="Prot_kinase_dom"/>
</dbReference>
<dbReference type="InterPro" id="IPR017441">
    <property type="entry name" value="Protein_kinase_ATP_BS"/>
</dbReference>
<dbReference type="InterPro" id="IPR008271">
    <property type="entry name" value="Ser/Thr_kinase_AS"/>
</dbReference>
<dbReference type="PANTHER" id="PTHR24055">
    <property type="entry name" value="MITOGEN-ACTIVATED PROTEIN KINASE"/>
    <property type="match status" value="1"/>
</dbReference>
<dbReference type="Pfam" id="PF00069">
    <property type="entry name" value="Pkinase"/>
    <property type="match status" value="1"/>
</dbReference>
<dbReference type="SMART" id="SM00220">
    <property type="entry name" value="S_TKc"/>
    <property type="match status" value="1"/>
</dbReference>
<dbReference type="SUPFAM" id="SSF56112">
    <property type="entry name" value="Protein kinase-like (PK-like)"/>
    <property type="match status" value="1"/>
</dbReference>
<dbReference type="PROSITE" id="PS01351">
    <property type="entry name" value="MAPK"/>
    <property type="match status" value="1"/>
</dbReference>
<dbReference type="PROSITE" id="PS00107">
    <property type="entry name" value="PROTEIN_KINASE_ATP"/>
    <property type="match status" value="1"/>
</dbReference>
<dbReference type="PROSITE" id="PS50011">
    <property type="entry name" value="PROTEIN_KINASE_DOM"/>
    <property type="match status" value="1"/>
</dbReference>
<dbReference type="PROSITE" id="PS00108">
    <property type="entry name" value="PROTEIN_KINASE_ST"/>
    <property type="match status" value="1"/>
</dbReference>
<protein>
    <recommendedName>
        <fullName evidence="11">Mitogen-activated protein kinase 15</fullName>
        <ecNumber evidence="1">2.7.11.24</ecNumber>
    </recommendedName>
    <alternativeName>
        <fullName evidence="10">Swimming-induced paralysis protein 13</fullName>
        <shortName evidence="10">SWIP-13</shortName>
    </alternativeName>
</protein>
<gene>
    <name evidence="9 12" type="primary">mapk-15</name>
    <name evidence="10" type="synonym">swip-13</name>
    <name evidence="12" type="ORF">C05D10.2</name>
</gene>
<proteinExistence type="evidence at protein level"/>
<name>MK15_CAEEL</name>
<feature type="chain" id="PRO_0000186307" description="Mitogen-activated protein kinase 15" evidence="11">
    <location>
        <begin position="1"/>
        <end position="470"/>
    </location>
</feature>
<feature type="domain" description="Protein kinase" evidence="2">
    <location>
        <begin position="13"/>
        <end position="306"/>
    </location>
</feature>
<feature type="region of interest" description="Disordered" evidence="4">
    <location>
        <begin position="362"/>
        <end position="445"/>
    </location>
</feature>
<feature type="short sequence motif" description="TXY">
    <location>
        <begin position="178"/>
        <end position="180"/>
    </location>
</feature>
<feature type="compositionally biased region" description="Low complexity" evidence="4">
    <location>
        <begin position="394"/>
        <end position="406"/>
    </location>
</feature>
<feature type="compositionally biased region" description="Basic and acidic residues" evidence="4">
    <location>
        <begin position="409"/>
        <end position="426"/>
    </location>
</feature>
<feature type="active site" description="Proton acceptor" evidence="2 3">
    <location>
        <position position="137"/>
    </location>
</feature>
<feature type="binding site" evidence="2">
    <location>
        <begin position="19"/>
        <end position="27"/>
    </location>
    <ligand>
        <name>ATP</name>
        <dbReference type="ChEBI" id="CHEBI:30616"/>
    </ligand>
</feature>
<feature type="binding site" evidence="2">
    <location>
        <position position="42"/>
    </location>
    <ligand>
        <name>ATP</name>
        <dbReference type="ChEBI" id="CHEBI:30616"/>
    </ligand>
</feature>
<feature type="modified residue" description="Phosphothreonine" evidence="1">
    <location>
        <position position="178"/>
    </location>
</feature>
<feature type="modified residue" description="Phosphotyrosine" evidence="1">
    <location>
        <position position="180"/>
    </location>
</feature>
<feature type="mutagenesis site" description="Causes URX dendrite overgrowth." evidence="8">
    <original>K</original>
    <variation>A</variation>
    <location>
        <position position="42"/>
    </location>
</feature>
<feature type="mutagenesis site" description="In vt32; loss of function allele that displays reserpine-sensitive swimming-induced paralysis phenotype." evidence="6">
    <original>R</original>
    <variation>Q</variation>
    <location>
        <position position="59"/>
    </location>
</feature>
<feature type="mutagenesis site" description="In hmn5; overgrowth of URX dendrite, extending up to 150% of its normal length, making a U-turn at the nose and looping back in the direction of the cell body rather than ceasing growth at the tip of the nose, with increasing dendrite outgrowth from larval stages to adult animals. Rarely, starved animals exhibit ectopic branching of the URX dendrites." evidence="8">
    <location>
        <begin position="185"/>
        <end position="470"/>
    </location>
</feature>
<feature type="mutagenesis site" description="In hmn51; causes URX dendrite overgrowth." evidence="8">
    <original>D</original>
    <variation>N</variation>
    <location>
        <position position="203"/>
    </location>
</feature>
<feature type="mutagenesis site" description="Causes URX dendrite overgrowth." evidence="8">
    <location>
        <begin position="342"/>
        <end position="345"/>
    </location>
</feature>
<reference key="1">
    <citation type="journal article" date="1998" name="Science">
        <title>Genome sequence of the nematode C. elegans: a platform for investigating biology.</title>
        <authorList>
            <consortium name="The C. elegans sequencing consortium"/>
        </authorList>
    </citation>
    <scope>NUCLEOTIDE SEQUENCE [LARGE SCALE GENOMIC DNA]</scope>
    <source>
        <strain>Bristol N2</strain>
    </source>
</reference>
<reference key="2">
    <citation type="journal article" date="2017" name="Cytoskeleton">
        <title>MAPK-15 is a ciliary protein required for PKD-2 localization and male mating behavior in Caenorhabditis elegans.</title>
        <authorList>
            <person name="Piasecki B.P."/>
            <person name="Sasani T.A."/>
            <person name="Lessenger A.T."/>
            <person name="Huth N."/>
            <person name="Farrell S."/>
        </authorList>
    </citation>
    <scope>FUNCTION</scope>
    <scope>SUBCELLULAR LOCATION</scope>
    <scope>TISSUE SPECIFICITY</scope>
    <scope>DISRUPTION PHENOTYPE</scope>
</reference>
<reference key="3">
    <citation type="journal article" date="2017" name="Genetics">
        <title>Primary Cilium Formation and Ciliary Protein Trafficking Is Regulated by the Atypical MAP Kinase MAPK15 in Caenorhabditis elegans and Human Cells.</title>
        <authorList>
            <person name="Kazatskaya A."/>
            <person name="Kuhns S."/>
            <person name="Lambacher N.J."/>
            <person name="Kennedy J.E."/>
            <person name="Brear A.G."/>
            <person name="McManus G.J."/>
            <person name="Sengupta P."/>
            <person name="Blacque O.E."/>
        </authorList>
    </citation>
    <scope>FUNCTION</scope>
    <scope>SUBCELLULAR LOCATION</scope>
    <scope>TISSUE SPECIFICITY</scope>
    <scope>DISRUPTION PHENOTYPE</scope>
</reference>
<reference key="4">
    <citation type="journal article" date="2017" name="J. Neurosci.">
        <title>The Atypical MAP Kinase SWIP-13/ERK8 Regulates Dopamine Transporters through a Rho-Dependent Mechanism.</title>
        <authorList>
            <person name="Bermingham D.P."/>
            <person name="Hardaway J.A."/>
            <person name="Refai O."/>
            <person name="Marks C.R."/>
            <person name="Snider S.L."/>
            <person name="Sturgeon S.M."/>
            <person name="Spencer W.C."/>
            <person name="Colbran R.J."/>
            <person name="Miller D.M. III"/>
            <person name="Blakely R.D."/>
        </authorList>
    </citation>
    <scope>FUNCTION</scope>
    <scope>DISRUPTION PHENOTYPE</scope>
    <scope>MUTAGENESIS OF ARG-59</scope>
</reference>
<reference key="5">
    <citation type="journal article" date="2018" name="PLoS Genet.">
        <title>A neuronal MAP kinase constrains growth of a Caenorhabditis elegans sensory dendrite throughout the life of the organism.</title>
        <authorList>
            <person name="McLachlan I.G."/>
            <person name="Beets I."/>
            <person name="de Bono M."/>
            <person name="Heiman M.G."/>
        </authorList>
    </citation>
    <scope>FUNCTION</scope>
    <scope>SUBCELLULAR LOCATION</scope>
    <scope>TISSUE SPECIFICITY</scope>
    <scope>DEVELOPMENTAL STAGE</scope>
    <scope>MUTAGENESIS OF LYS-42; 185-TRP--TYR-470; ASP-203 AND 342-TYR--ILE-345</scope>
</reference>
<accession>Q11179</accession>
<accession>G8JY04</accession>
<accession>Q8T3F7</accession>
<keyword id="KW-0067">ATP-binding</keyword>
<keyword id="KW-0085">Behavior</keyword>
<keyword id="KW-0965">Cell junction</keyword>
<keyword id="KW-1003">Cell membrane</keyword>
<keyword id="KW-0966">Cell projection</keyword>
<keyword id="KW-0970">Cilium biogenesis/degradation</keyword>
<keyword id="KW-0963">Cytoplasm</keyword>
<keyword id="KW-0206">Cytoskeleton</keyword>
<keyword id="KW-0418">Kinase</keyword>
<keyword id="KW-0472">Membrane</keyword>
<keyword id="KW-0547">Nucleotide-binding</keyword>
<keyword id="KW-0597">Phosphoprotein</keyword>
<keyword id="KW-1185">Reference proteome</keyword>
<keyword id="KW-0723">Serine/threonine-protein kinase</keyword>
<keyword id="KW-0808">Transferase</keyword>
<comment type="function">
    <text evidence="5 6 7 8">Atypical MAPK protein. Regulates primary cilium formation in sensory neurons and the localization of ciliary proteins involved in cilium structure, transport, and signaling (PubMed:28745435, PubMed:29021280). Acts in dopamine (DA) neurons to support synaptic membrane dat-1 availability via activation of rho-1 thereby sustaining normal levels of DA clearance (PubMed:28842414). Plays a role in male mating behavior, probably in part through regulating the localization of the polycystin pkd-2 (PubMed:28745435). Functions postembryonically in the URX sensory neurons to constrain URX dendrite growth throughout lifetime, probably by restricting expansion of the subcellular sensory compartment at the dendrite ending (PubMed:29879119).</text>
</comment>
<comment type="catalytic activity">
    <reaction evidence="1">
        <text>L-seryl-[protein] + ATP = O-phospho-L-seryl-[protein] + ADP + H(+)</text>
        <dbReference type="Rhea" id="RHEA:17989"/>
        <dbReference type="Rhea" id="RHEA-COMP:9863"/>
        <dbReference type="Rhea" id="RHEA-COMP:11604"/>
        <dbReference type="ChEBI" id="CHEBI:15378"/>
        <dbReference type="ChEBI" id="CHEBI:29999"/>
        <dbReference type="ChEBI" id="CHEBI:30616"/>
        <dbReference type="ChEBI" id="CHEBI:83421"/>
        <dbReference type="ChEBI" id="CHEBI:456216"/>
        <dbReference type="EC" id="2.7.11.24"/>
    </reaction>
</comment>
<comment type="catalytic activity">
    <reaction evidence="1">
        <text>L-threonyl-[protein] + ATP = O-phospho-L-threonyl-[protein] + ADP + H(+)</text>
        <dbReference type="Rhea" id="RHEA:46608"/>
        <dbReference type="Rhea" id="RHEA-COMP:11060"/>
        <dbReference type="Rhea" id="RHEA-COMP:11605"/>
        <dbReference type="ChEBI" id="CHEBI:15378"/>
        <dbReference type="ChEBI" id="CHEBI:30013"/>
        <dbReference type="ChEBI" id="CHEBI:30616"/>
        <dbReference type="ChEBI" id="CHEBI:61977"/>
        <dbReference type="ChEBI" id="CHEBI:456216"/>
        <dbReference type="EC" id="2.7.11.24"/>
    </reaction>
</comment>
<comment type="cofactor">
    <cofactor evidence="1">
        <name>Mg(2+)</name>
        <dbReference type="ChEBI" id="CHEBI:18420"/>
    </cofactor>
</comment>
<comment type="activity regulation">
    <text evidence="1">Activated by threonine and tyrosine phosphorylation.</text>
</comment>
<comment type="subcellular location">
    <subcellularLocation>
        <location evidence="5 7">Cell projection</location>
        <location evidence="5 7">Cilium</location>
    </subcellularLocation>
    <subcellularLocation>
        <location evidence="5">Cell projection</location>
        <location evidence="5">Cilium membrane</location>
    </subcellularLocation>
    <subcellularLocation>
        <location evidence="7">Cytoplasm</location>
        <location evidence="7">Cytoskeleton</location>
        <location evidence="7">Cilium axoneme</location>
    </subcellularLocation>
    <subcellularLocation>
        <location evidence="7">Cytoplasm</location>
        <location evidence="7">Cytoskeleton</location>
        <location evidence="7">Cilium basal body</location>
    </subcellularLocation>
    <subcellularLocation>
        <location evidence="7">Cell junction</location>
    </subcellularLocation>
    <subcellularLocation>
        <location evidence="5">Perikaryon</location>
    </subcellularLocation>
    <subcellularLocation>
        <location evidence="5 8">Cell projection</location>
        <location evidence="5 8">Dendrite</location>
    </subcellularLocation>
    <text evidence="8">Enriched localization at the URX dendrite ending.</text>
</comment>
<comment type="tissue specificity">
    <text evidence="5 7 8">Expressed in the URX neuron and in many other head sensory neurons (PubMed:29879119). Isoform a: Expressed in head and tail ciliated sensory neurons, and in mid-body neurons. Isoform c: Expressed in head and tail ciliated sensory neurons, and in mid-body neurons.</text>
</comment>
<comment type="developmental stage">
    <text evidence="8">Expressed in all larval stages.</text>
</comment>
<comment type="domain">
    <text evidence="1">The TXY motif contains the threonine and tyrosine residues whose phosphorylation activates the MAP kinases.</text>
</comment>
<comment type="PTM">
    <text evidence="1">Dually phosphorylated on Thr-178 and Tyr-180, which activates the enzyme.</text>
</comment>
<comment type="disruption phenotype">
    <text evidence="5 6 7">Viable, but males display irregular mating behavior (PubMed:28745435). Ciliary defects in ciliated sensory neurons include impaired extension of dendrites, and abnormal amphid and phasmid sensillum morphology (PubMed:28745435, PubMed:29021280). Homozygotes present the swimming-induced paralysis (Swip) phenotype (PubMed:28842414).</text>
</comment>
<comment type="similarity">
    <text evidence="11">Belongs to the protein kinase superfamily. CMGC Ser/Thr protein kinase family. MAP kinase subfamily.</text>
</comment>
<evidence type="ECO:0000250" key="1">
    <source>
        <dbReference type="UniProtKB" id="Q17446"/>
    </source>
</evidence>
<evidence type="ECO:0000255" key="2">
    <source>
        <dbReference type="PROSITE-ProRule" id="PRU00159"/>
    </source>
</evidence>
<evidence type="ECO:0000255" key="3">
    <source>
        <dbReference type="PROSITE-ProRule" id="PRU10027"/>
    </source>
</evidence>
<evidence type="ECO:0000256" key="4">
    <source>
        <dbReference type="SAM" id="MobiDB-lite"/>
    </source>
</evidence>
<evidence type="ECO:0000269" key="5">
    <source>
    </source>
</evidence>
<evidence type="ECO:0000269" key="6">
    <source>
    </source>
</evidence>
<evidence type="ECO:0000269" key="7">
    <source>
    </source>
</evidence>
<evidence type="ECO:0000269" key="8">
    <source>
    </source>
</evidence>
<evidence type="ECO:0000303" key="9">
    <source>
    </source>
</evidence>
<evidence type="ECO:0000303" key="10">
    <source>
    </source>
</evidence>
<evidence type="ECO:0000305" key="11"/>
<evidence type="ECO:0000312" key="12">
    <source>
        <dbReference type="WormBase" id="C05D10.2a"/>
    </source>
</evidence>
<organism>
    <name type="scientific">Caenorhabditis elegans</name>
    <dbReference type="NCBI Taxonomy" id="6239"/>
    <lineage>
        <taxon>Eukaryota</taxon>
        <taxon>Metazoa</taxon>
        <taxon>Ecdysozoa</taxon>
        <taxon>Nematoda</taxon>
        <taxon>Chromadorea</taxon>
        <taxon>Rhabditida</taxon>
        <taxon>Rhabditina</taxon>
        <taxon>Rhabditomorpha</taxon>
        <taxon>Rhabditoidea</taxon>
        <taxon>Rhabditidae</taxon>
        <taxon>Peloderinae</taxon>
        <taxon>Caenorhabditis</taxon>
    </lineage>
</organism>
<sequence>MTDDVDTHIHEKFDLQKRLGKGAYGIVWKAYDKRSRETVALKKIFDAFRNPTDSQRTFREVMFLQEFGKHPNVIKLYNIFRADNDRDIYLAFEFMEADLHNVIKKGSILKDVHKQYIMCQLFRAIRFLHSGNVLHRDLKPSNVLLDADCRVKLADFGLARSLSSLEDYPEGQKMPDLTEYVATRWYRSPEILLAAKRYTKGVDMWSLGCILAEMLIGRALFPGSSTINQIERIMNTIAKPSRADIASIGSHYAASVLEKMPQRPRKPLDLIITQSQTAAIDMVQRLLIFAPQKRLTVEQCLVHPYVVQFHNPSEEPVLNYEVYPPLPDHIQLSIDDYRDRLYEMIDEKKASFKRIQHEKIRPYGEDKSRAPIAQAECSDTDYDTARSLQRTTSMDKNNSSSHDSSSGTLRERAASAESRTSKDSNGEMRNGNGNTPSSIKQRRRSVERARLFANIKPSKILHPHKLISNY</sequence>